<comment type="function">
    <text evidence="1">Catalyzes the formation of phosphatidylethanolamine (PtdEtn) from phosphatidylserine (PtdSer).</text>
</comment>
<comment type="catalytic activity">
    <reaction evidence="1">
        <text>a 1,2-diacyl-sn-glycero-3-phospho-L-serine + H(+) = a 1,2-diacyl-sn-glycero-3-phosphoethanolamine + CO2</text>
        <dbReference type="Rhea" id="RHEA:20828"/>
        <dbReference type="ChEBI" id="CHEBI:15378"/>
        <dbReference type="ChEBI" id="CHEBI:16526"/>
        <dbReference type="ChEBI" id="CHEBI:57262"/>
        <dbReference type="ChEBI" id="CHEBI:64612"/>
        <dbReference type="EC" id="4.1.1.65"/>
    </reaction>
</comment>
<comment type="cofactor">
    <cofactor evidence="1">
        <name>pyruvate</name>
        <dbReference type="ChEBI" id="CHEBI:15361"/>
    </cofactor>
    <text evidence="1">Binds 1 pyruvoyl group covalently per subunit.</text>
</comment>
<comment type="pathway">
    <text evidence="1">Phospholipid metabolism; phosphatidylethanolamine biosynthesis; phosphatidylethanolamine from CDP-diacylglycerol: step 2/2.</text>
</comment>
<comment type="subunit">
    <text evidence="1">Heterodimer of a large membrane-associated beta subunit and a small pyruvoyl-containing alpha subunit.</text>
</comment>
<comment type="subcellular location">
    <subcellularLocation>
        <location evidence="1">Cell membrane</location>
        <topology evidence="1">Peripheral membrane protein</topology>
    </subcellularLocation>
</comment>
<comment type="PTM">
    <text evidence="1">Is synthesized initially as an inactive proenzyme. Formation of the active enzyme involves a self-maturation process in which the active site pyruvoyl group is generated from an internal serine residue via an autocatalytic post-translational modification. Two non-identical subunits are generated from the proenzyme in this reaction, and the pyruvate is formed at the N-terminus of the alpha chain, which is derived from the carboxyl end of the proenzyme. The autoendoproteolytic cleavage occurs by a canonical serine protease mechanism, in which the side chain hydroxyl group of the serine supplies its oxygen atom to form the C-terminus of the beta chain, while the remainder of the serine residue undergoes an oxidative deamination to produce ammonia and the pyruvoyl prosthetic group on the alpha chain. During this reaction, the Ser that is part of the protease active site of the proenzyme becomes the pyruvoyl prosthetic group, which constitutes an essential element of the active site of the mature decarboxylase.</text>
</comment>
<comment type="similarity">
    <text evidence="1">Belongs to the phosphatidylserine decarboxylase family. PSD-B subfamily. Prokaryotic type I sub-subfamily.</text>
</comment>
<accession>A8H8H5</accession>
<gene>
    <name evidence="1" type="primary">psd</name>
    <name type="ordered locus">Spea_3549</name>
</gene>
<dbReference type="EC" id="4.1.1.65" evidence="1"/>
<dbReference type="EMBL" id="CP000851">
    <property type="protein sequence ID" value="ABV88862.1"/>
    <property type="molecule type" value="Genomic_DNA"/>
</dbReference>
<dbReference type="RefSeq" id="WP_012156747.1">
    <property type="nucleotide sequence ID" value="NC_009901.1"/>
</dbReference>
<dbReference type="SMR" id="A8H8H5"/>
<dbReference type="STRING" id="398579.Spea_3549"/>
<dbReference type="KEGG" id="spl:Spea_3549"/>
<dbReference type="eggNOG" id="COG0688">
    <property type="taxonomic scope" value="Bacteria"/>
</dbReference>
<dbReference type="HOGENOM" id="CLU_029061_4_1_6"/>
<dbReference type="OrthoDB" id="9802030at2"/>
<dbReference type="UniPathway" id="UPA00558">
    <property type="reaction ID" value="UER00616"/>
</dbReference>
<dbReference type="Proteomes" id="UP000002608">
    <property type="component" value="Chromosome"/>
</dbReference>
<dbReference type="GO" id="GO:0005886">
    <property type="term" value="C:plasma membrane"/>
    <property type="evidence" value="ECO:0007669"/>
    <property type="project" value="UniProtKB-SubCell"/>
</dbReference>
<dbReference type="GO" id="GO:0004609">
    <property type="term" value="F:phosphatidylserine decarboxylase activity"/>
    <property type="evidence" value="ECO:0007669"/>
    <property type="project" value="UniProtKB-UniRule"/>
</dbReference>
<dbReference type="GO" id="GO:0006646">
    <property type="term" value="P:phosphatidylethanolamine biosynthetic process"/>
    <property type="evidence" value="ECO:0007669"/>
    <property type="project" value="UniProtKB-UniRule"/>
</dbReference>
<dbReference type="HAMAP" id="MF_00662">
    <property type="entry name" value="PS_decarb_PSD_B_type1"/>
    <property type="match status" value="1"/>
</dbReference>
<dbReference type="InterPro" id="IPR003817">
    <property type="entry name" value="PS_Dcarbxylase"/>
</dbReference>
<dbReference type="InterPro" id="IPR033177">
    <property type="entry name" value="PSD-B"/>
</dbReference>
<dbReference type="InterPro" id="IPR033178">
    <property type="entry name" value="PSD_type1_pro"/>
</dbReference>
<dbReference type="NCBIfam" id="TIGR00163">
    <property type="entry name" value="PS_decarb"/>
    <property type="match status" value="1"/>
</dbReference>
<dbReference type="PANTHER" id="PTHR10067">
    <property type="entry name" value="PHOSPHATIDYLSERINE DECARBOXYLASE"/>
    <property type="match status" value="1"/>
</dbReference>
<dbReference type="PANTHER" id="PTHR10067:SF6">
    <property type="entry name" value="PHOSPHATIDYLSERINE DECARBOXYLASE PROENZYME, MITOCHONDRIAL"/>
    <property type="match status" value="1"/>
</dbReference>
<dbReference type="Pfam" id="PF02666">
    <property type="entry name" value="PS_Dcarbxylase"/>
    <property type="match status" value="1"/>
</dbReference>
<protein>
    <recommendedName>
        <fullName evidence="1">Phosphatidylserine decarboxylase proenzyme</fullName>
        <ecNumber evidence="1">4.1.1.65</ecNumber>
    </recommendedName>
    <component>
        <recommendedName>
            <fullName evidence="1">Phosphatidylserine decarboxylase alpha chain</fullName>
        </recommendedName>
    </component>
    <component>
        <recommendedName>
            <fullName evidence="1">Phosphatidylserine decarboxylase beta chain</fullName>
        </recommendedName>
    </component>
</protein>
<feature type="chain" id="PRO_1000082906" description="Phosphatidylserine decarboxylase beta chain" evidence="1">
    <location>
        <begin position="1"/>
        <end position="251"/>
    </location>
</feature>
<feature type="chain" id="PRO_1000082907" description="Phosphatidylserine decarboxylase alpha chain" evidence="1">
    <location>
        <begin position="252"/>
        <end position="287"/>
    </location>
</feature>
<feature type="active site" description="Charge relay system; for autoendoproteolytic cleavage activity" evidence="1">
    <location>
        <position position="89"/>
    </location>
</feature>
<feature type="active site" description="Charge relay system; for autoendoproteolytic cleavage activity" evidence="1">
    <location>
        <position position="146"/>
    </location>
</feature>
<feature type="active site" description="Charge relay system; for autoendoproteolytic cleavage activity" evidence="1">
    <location>
        <position position="252"/>
    </location>
</feature>
<feature type="active site" description="Schiff-base intermediate with substrate; via pyruvic acid; for decarboxylase activity" evidence="1">
    <location>
        <position position="252"/>
    </location>
</feature>
<feature type="site" description="Cleavage (non-hydrolytic); by autocatalysis" evidence="1">
    <location>
        <begin position="251"/>
        <end position="252"/>
    </location>
</feature>
<feature type="modified residue" description="Pyruvic acid (Ser); by autocatalysis" evidence="1">
    <location>
        <position position="252"/>
    </location>
</feature>
<proteinExistence type="inferred from homology"/>
<organism>
    <name type="scientific">Shewanella pealeana (strain ATCC 700345 / ANG-SQ1)</name>
    <dbReference type="NCBI Taxonomy" id="398579"/>
    <lineage>
        <taxon>Bacteria</taxon>
        <taxon>Pseudomonadati</taxon>
        <taxon>Pseudomonadota</taxon>
        <taxon>Gammaproteobacteria</taxon>
        <taxon>Alteromonadales</taxon>
        <taxon>Shewanellaceae</taxon>
        <taxon>Shewanella</taxon>
    </lineage>
</organism>
<evidence type="ECO:0000255" key="1">
    <source>
        <dbReference type="HAMAP-Rule" id="MF_00662"/>
    </source>
</evidence>
<name>PSD_SHEPA</name>
<sequence>MDKIKIALQYIMPKHLLSRLVGKLAAAQMGSVTTAAINWFIKQYKIDMSEAAQSEATAYASFNDFFTRALKPGIRPLCEDNDYIVHPVDGAVSQLGPIKEGRIFQAKGHDYSSLALLGDQADDAKRFEGGDFATIYLAPKDYHRIHMPIKGTLSKMTYVPGELFSVNPLTAENVPGLFARNERVVAIFETEIGPMAMVLVGATIVASIETVWAGTVTPPTGKKVFTWDYPTEGPNALTLEKGAEMGRFKLGSTVVMLFAKDALDKFADGVEPKSVTRMGQAFAKIED</sequence>
<keyword id="KW-1003">Cell membrane</keyword>
<keyword id="KW-0210">Decarboxylase</keyword>
<keyword id="KW-0444">Lipid biosynthesis</keyword>
<keyword id="KW-0443">Lipid metabolism</keyword>
<keyword id="KW-0456">Lyase</keyword>
<keyword id="KW-0472">Membrane</keyword>
<keyword id="KW-0594">Phospholipid biosynthesis</keyword>
<keyword id="KW-1208">Phospholipid metabolism</keyword>
<keyword id="KW-0670">Pyruvate</keyword>
<keyword id="KW-1185">Reference proteome</keyword>
<keyword id="KW-0865">Zymogen</keyword>
<reference key="1">
    <citation type="submission" date="2007-10" db="EMBL/GenBank/DDBJ databases">
        <title>Complete sequence of Shewanella pealeana ATCC 700345.</title>
        <authorList>
            <consortium name="US DOE Joint Genome Institute"/>
            <person name="Copeland A."/>
            <person name="Lucas S."/>
            <person name="Lapidus A."/>
            <person name="Barry K."/>
            <person name="Glavina del Rio T."/>
            <person name="Dalin E."/>
            <person name="Tice H."/>
            <person name="Pitluck S."/>
            <person name="Chertkov O."/>
            <person name="Brettin T."/>
            <person name="Bruce D."/>
            <person name="Detter J.C."/>
            <person name="Han C."/>
            <person name="Schmutz J."/>
            <person name="Larimer F."/>
            <person name="Land M."/>
            <person name="Hauser L."/>
            <person name="Kyrpides N."/>
            <person name="Kim E."/>
            <person name="Zhao J.-S.Z."/>
            <person name="Manno D."/>
            <person name="Hawari J."/>
            <person name="Richardson P."/>
        </authorList>
    </citation>
    <scope>NUCLEOTIDE SEQUENCE [LARGE SCALE GENOMIC DNA]</scope>
    <source>
        <strain>ATCC 700345 / ANG-SQ1</strain>
    </source>
</reference>